<comment type="function">
    <text evidence="5">Probable potassium channel protein.</text>
</comment>
<comment type="subcellular location">
    <subcellularLocation>
        <location evidence="6">Cell membrane</location>
        <topology evidence="6">Multi-pass membrane protein</topology>
    </subcellularLocation>
</comment>
<organism>
    <name type="scientific">Methanocaldococcus jannaschii (strain ATCC 43067 / DSM 2661 / JAL-1 / JCM 10045 / NBRC 100440)</name>
    <name type="common">Methanococcus jannaschii</name>
    <dbReference type="NCBI Taxonomy" id="243232"/>
    <lineage>
        <taxon>Archaea</taxon>
        <taxon>Methanobacteriati</taxon>
        <taxon>Methanobacteriota</taxon>
        <taxon>Methanomada group</taxon>
        <taxon>Methanococci</taxon>
        <taxon>Methanococcales</taxon>
        <taxon>Methanocaldococcaceae</taxon>
        <taxon>Methanocaldococcus</taxon>
    </lineage>
</organism>
<feature type="chain" id="PRO_0000054100" description="Probable potassium channel protein 2">
    <location>
        <begin position="1"/>
        <end position="343"/>
    </location>
</feature>
<feature type="topological domain" description="Cytoplasmic" evidence="2">
    <location>
        <begin position="1"/>
        <end position="7"/>
    </location>
</feature>
<feature type="transmembrane region" description="Helical" evidence="2">
    <location>
        <begin position="8"/>
        <end position="28"/>
    </location>
</feature>
<feature type="topological domain" description="Extracellular" evidence="2">
    <location>
        <begin position="29"/>
        <end position="61"/>
    </location>
</feature>
<feature type="transmembrane region" description="Helical" evidence="2">
    <location>
        <begin position="62"/>
        <end position="82"/>
    </location>
</feature>
<feature type="topological domain" description="Cytoplasmic" evidence="2">
    <location>
        <begin position="83"/>
        <end position="343"/>
    </location>
</feature>
<feature type="domain" description="RCK N-terminal" evidence="3">
    <location>
        <begin position="107"/>
        <end position="227"/>
    </location>
</feature>
<feature type="domain" description="RCK C-terminal" evidence="4">
    <location>
        <begin position="253"/>
        <end position="338"/>
    </location>
</feature>
<feature type="short sequence motif" description="Selectivity filter" evidence="1">
    <location>
        <begin position="46"/>
        <end position="51"/>
    </location>
</feature>
<gene>
    <name type="ordered locus">MJ1357</name>
</gene>
<evidence type="ECO:0000250" key="1"/>
<evidence type="ECO:0000255" key="2"/>
<evidence type="ECO:0000255" key="3">
    <source>
        <dbReference type="PROSITE-ProRule" id="PRU00543"/>
    </source>
</evidence>
<evidence type="ECO:0000255" key="4">
    <source>
        <dbReference type="PROSITE-ProRule" id="PRU00544"/>
    </source>
</evidence>
<evidence type="ECO:0000269" key="5">
    <source>
    </source>
</evidence>
<evidence type="ECO:0000305" key="6"/>
<name>MJK2_METJA</name>
<keyword id="KW-1003">Cell membrane</keyword>
<keyword id="KW-0407">Ion channel</keyword>
<keyword id="KW-0406">Ion transport</keyword>
<keyword id="KW-0472">Membrane</keyword>
<keyword id="KW-0630">Potassium</keyword>
<keyword id="KW-0631">Potassium channel</keyword>
<keyword id="KW-0633">Potassium transport</keyword>
<keyword id="KW-1185">Reference proteome</keyword>
<keyword id="KW-0812">Transmembrane</keyword>
<keyword id="KW-1133">Transmembrane helix</keyword>
<keyword id="KW-0813">Transport</keyword>
<sequence length="343" mass="38884">METSKKLVIVAVLSITLILTYAYLISIIEGVDYFTALYFSVITITTTGYGDFTPKTFLGRTLTVVYLCVGVGIVMYLFSLIAEFIVEGKFEEFVRLKKMKNKIKTLKDHYIICGYGRLGKVVGEKFIEENIPFIAIDINEDVLKEEYEKYPDKFLYIVGDAKKEEVLKKAKIDKAKGLIATLPSDADNVFLTLTARELNPNILITAKADEKEAIRKLKIAGANRVVSPYLIGGLRMAEVSVRPGILDFLSTFIKIAKDEYEEDIELRKFVIEKDSELAYKSLKDANIRGKTGATILGIRREKEFCINPYPEFILKPGDVIYAFGTEENLKYLENLVKKKKKKL</sequence>
<protein>
    <recommendedName>
        <fullName>Probable potassium channel protein 2</fullName>
    </recommendedName>
    <alternativeName>
        <fullName>MjK2</fullName>
    </alternativeName>
</protein>
<accession>Q58752</accession>
<proteinExistence type="predicted"/>
<reference key="1">
    <citation type="journal article" date="1996" name="Science">
        <title>Complete genome sequence of the methanogenic archaeon, Methanococcus jannaschii.</title>
        <authorList>
            <person name="Bult C.J."/>
            <person name="White O."/>
            <person name="Olsen G.J."/>
            <person name="Zhou L."/>
            <person name="Fleischmann R.D."/>
            <person name="Sutton G.G."/>
            <person name="Blake J.A."/>
            <person name="FitzGerald L.M."/>
            <person name="Clayton R.A."/>
            <person name="Gocayne J.D."/>
            <person name="Kerlavage A.R."/>
            <person name="Dougherty B.A."/>
            <person name="Tomb J.-F."/>
            <person name="Adams M.D."/>
            <person name="Reich C.I."/>
            <person name="Overbeek R."/>
            <person name="Kirkness E.F."/>
            <person name="Weinstock K.G."/>
            <person name="Merrick J.M."/>
            <person name="Glodek A."/>
            <person name="Scott J.L."/>
            <person name="Geoghagen N.S.M."/>
            <person name="Weidman J.F."/>
            <person name="Fuhrmann J.L."/>
            <person name="Nguyen D."/>
            <person name="Utterback T.R."/>
            <person name="Kelley J.M."/>
            <person name="Peterson J.D."/>
            <person name="Sadow P.W."/>
            <person name="Hanna M.C."/>
            <person name="Cotton M.D."/>
            <person name="Roberts K.M."/>
            <person name="Hurst M.A."/>
            <person name="Kaine B.P."/>
            <person name="Borodovsky M."/>
            <person name="Klenk H.-P."/>
            <person name="Fraser C.M."/>
            <person name="Smith H.O."/>
            <person name="Woese C.R."/>
            <person name="Venter J.C."/>
        </authorList>
    </citation>
    <scope>NUCLEOTIDE SEQUENCE [LARGE SCALE GENOMIC DNA]</scope>
    <source>
        <strain>ATCC 43067 / DSM 2661 / JAL-1 / JCM 10045 / NBRC 100440</strain>
    </source>
</reference>
<reference key="2">
    <citation type="journal article" date="2003" name="FEBS Lett.">
        <title>MjK1, a K+ channel from M. jannaschii, mediates K+ uptake and K+ sensitivity in E. coli.</title>
        <authorList>
            <person name="Hellmer J."/>
            <person name="Zeilinger C."/>
        </authorList>
    </citation>
    <scope>FUNCTION</scope>
    <source>
        <strain>ATCC 43067 / DSM 2661 / JAL-1 / JCM 10045 / NBRC 100440</strain>
    </source>
</reference>
<dbReference type="EMBL" id="L77117">
    <property type="protein sequence ID" value="AAB99365.1"/>
    <property type="molecule type" value="Genomic_DNA"/>
</dbReference>
<dbReference type="PIR" id="D64469">
    <property type="entry name" value="D64469"/>
</dbReference>
<dbReference type="RefSeq" id="WP_010870874.1">
    <property type="nucleotide sequence ID" value="NC_000909.1"/>
</dbReference>
<dbReference type="SMR" id="Q58752"/>
<dbReference type="FunCoup" id="Q58752">
    <property type="interactions" value="1"/>
</dbReference>
<dbReference type="STRING" id="243232.MJ_1357"/>
<dbReference type="TCDB" id="1.A.1.13.10">
    <property type="family name" value="the voltage-gated ion channel (vic) superfamily"/>
</dbReference>
<dbReference type="PaxDb" id="243232-MJ_1357"/>
<dbReference type="EnsemblBacteria" id="AAB99365">
    <property type="protein sequence ID" value="AAB99365"/>
    <property type="gene ID" value="MJ_1357"/>
</dbReference>
<dbReference type="GeneID" id="1452259"/>
<dbReference type="KEGG" id="mja:MJ_1357"/>
<dbReference type="eggNOG" id="arCOG01958">
    <property type="taxonomic scope" value="Archaea"/>
</dbReference>
<dbReference type="HOGENOM" id="CLU_050982_0_1_2"/>
<dbReference type="InParanoid" id="Q58752"/>
<dbReference type="OrthoDB" id="43518at2157"/>
<dbReference type="PhylomeDB" id="Q58752"/>
<dbReference type="Proteomes" id="UP000000805">
    <property type="component" value="Chromosome"/>
</dbReference>
<dbReference type="GO" id="GO:0005886">
    <property type="term" value="C:plasma membrane"/>
    <property type="evidence" value="ECO:0007669"/>
    <property type="project" value="UniProtKB-SubCell"/>
</dbReference>
<dbReference type="GO" id="GO:0005267">
    <property type="term" value="F:potassium channel activity"/>
    <property type="evidence" value="ECO:0007669"/>
    <property type="project" value="UniProtKB-KW"/>
</dbReference>
<dbReference type="Gene3D" id="1.10.287.70">
    <property type="match status" value="1"/>
</dbReference>
<dbReference type="Gene3D" id="3.40.50.720">
    <property type="entry name" value="NAD(P)-binding Rossmann-like Domain"/>
    <property type="match status" value="1"/>
</dbReference>
<dbReference type="Gene3D" id="3.30.70.1450">
    <property type="entry name" value="Regulator of K+ conductance, C-terminal domain"/>
    <property type="match status" value="1"/>
</dbReference>
<dbReference type="InterPro" id="IPR013099">
    <property type="entry name" value="K_chnl_dom"/>
</dbReference>
<dbReference type="InterPro" id="IPR036291">
    <property type="entry name" value="NAD(P)-bd_dom_sf"/>
</dbReference>
<dbReference type="InterPro" id="IPR006037">
    <property type="entry name" value="RCK_C"/>
</dbReference>
<dbReference type="InterPro" id="IPR036721">
    <property type="entry name" value="RCK_C_sf"/>
</dbReference>
<dbReference type="InterPro" id="IPR003148">
    <property type="entry name" value="RCK_N"/>
</dbReference>
<dbReference type="InterPro" id="IPR050721">
    <property type="entry name" value="Trk_Ktr_HKT_K-transport"/>
</dbReference>
<dbReference type="PANTHER" id="PTHR43833:SF13">
    <property type="entry name" value="POTASSIUM CHANNEL PROTEIN 2-RELATED"/>
    <property type="match status" value="1"/>
</dbReference>
<dbReference type="PANTHER" id="PTHR43833">
    <property type="entry name" value="POTASSIUM CHANNEL PROTEIN 2-RELATED-RELATED"/>
    <property type="match status" value="1"/>
</dbReference>
<dbReference type="Pfam" id="PF07885">
    <property type="entry name" value="Ion_trans_2"/>
    <property type="match status" value="1"/>
</dbReference>
<dbReference type="Pfam" id="PF02080">
    <property type="entry name" value="TrkA_C"/>
    <property type="match status" value="1"/>
</dbReference>
<dbReference type="Pfam" id="PF02254">
    <property type="entry name" value="TrkA_N"/>
    <property type="match status" value="1"/>
</dbReference>
<dbReference type="SUPFAM" id="SSF51735">
    <property type="entry name" value="NAD(P)-binding Rossmann-fold domains"/>
    <property type="match status" value="1"/>
</dbReference>
<dbReference type="SUPFAM" id="SSF116726">
    <property type="entry name" value="TrkA C-terminal domain-like"/>
    <property type="match status" value="1"/>
</dbReference>
<dbReference type="SUPFAM" id="SSF81324">
    <property type="entry name" value="Voltage-gated potassium channels"/>
    <property type="match status" value="1"/>
</dbReference>
<dbReference type="PROSITE" id="PS51202">
    <property type="entry name" value="RCK_C"/>
    <property type="match status" value="1"/>
</dbReference>
<dbReference type="PROSITE" id="PS51201">
    <property type="entry name" value="RCK_N"/>
    <property type="match status" value="1"/>
</dbReference>